<sequence length="178" mass="20212">MIITVGGLPGTGTTTTSKLLSEKYGLNHVCAGFIFRDMAKEMNMTLQEFSSYAETNTEVDNEIDRRQVEAAQSGDLILEGRLAGWILKRSDIKPDLSIWLKADPMVRCIRISERENENVDLALEKMISREASEKKRYKEIYNIEIDDLSIYDLTIESSKWDAKGVFNIIEKAIDNLKA</sequence>
<dbReference type="EC" id="2.7.4.25" evidence="1"/>
<dbReference type="EMBL" id="BX950229">
    <property type="protein sequence ID" value="CAF30182.1"/>
    <property type="molecule type" value="Genomic_DNA"/>
</dbReference>
<dbReference type="RefSeq" id="WP_011170570.1">
    <property type="nucleotide sequence ID" value="NC_005791.1"/>
</dbReference>
<dbReference type="STRING" id="267377.MMP0626"/>
<dbReference type="EnsemblBacteria" id="CAF30182">
    <property type="protein sequence ID" value="CAF30182"/>
    <property type="gene ID" value="MMP0626"/>
</dbReference>
<dbReference type="GeneID" id="41279093"/>
<dbReference type="KEGG" id="mmp:MMP0626"/>
<dbReference type="PATRIC" id="fig|267377.15.peg.641"/>
<dbReference type="eggNOG" id="arCOG01037">
    <property type="taxonomic scope" value="Archaea"/>
</dbReference>
<dbReference type="HOGENOM" id="CLU_079959_1_0_2"/>
<dbReference type="OrthoDB" id="31096at2157"/>
<dbReference type="Proteomes" id="UP000000590">
    <property type="component" value="Chromosome"/>
</dbReference>
<dbReference type="GO" id="GO:0005737">
    <property type="term" value="C:cytoplasm"/>
    <property type="evidence" value="ECO:0007669"/>
    <property type="project" value="UniProtKB-SubCell"/>
</dbReference>
<dbReference type="GO" id="GO:0005524">
    <property type="term" value="F:ATP binding"/>
    <property type="evidence" value="ECO:0007669"/>
    <property type="project" value="UniProtKB-UniRule"/>
</dbReference>
<dbReference type="GO" id="GO:0036430">
    <property type="term" value="F:CMP kinase activity"/>
    <property type="evidence" value="ECO:0007669"/>
    <property type="project" value="RHEA"/>
</dbReference>
<dbReference type="GO" id="GO:0036431">
    <property type="term" value="F:dCMP kinase activity"/>
    <property type="evidence" value="ECO:0007669"/>
    <property type="project" value="RHEA"/>
</dbReference>
<dbReference type="GO" id="GO:0006220">
    <property type="term" value="P:pyrimidine nucleotide metabolic process"/>
    <property type="evidence" value="ECO:0007669"/>
    <property type="project" value="UniProtKB-UniRule"/>
</dbReference>
<dbReference type="CDD" id="cd02020">
    <property type="entry name" value="CMPK"/>
    <property type="match status" value="1"/>
</dbReference>
<dbReference type="Gene3D" id="3.40.50.300">
    <property type="entry name" value="P-loop containing nucleotide triphosphate hydrolases"/>
    <property type="match status" value="1"/>
</dbReference>
<dbReference type="HAMAP" id="MF_00239">
    <property type="entry name" value="Cytidyl_kinase_type2"/>
    <property type="match status" value="1"/>
</dbReference>
<dbReference type="InterPro" id="IPR011892">
    <property type="entry name" value="Cyt_kin_arch"/>
</dbReference>
<dbReference type="InterPro" id="IPR011994">
    <property type="entry name" value="Cytidylate_kinase_dom"/>
</dbReference>
<dbReference type="InterPro" id="IPR027417">
    <property type="entry name" value="P-loop_NTPase"/>
</dbReference>
<dbReference type="NCBIfam" id="TIGR02173">
    <property type="entry name" value="cyt_kin_arch"/>
    <property type="match status" value="1"/>
</dbReference>
<dbReference type="Pfam" id="PF13189">
    <property type="entry name" value="Cytidylate_kin2"/>
    <property type="match status" value="1"/>
</dbReference>
<dbReference type="SUPFAM" id="SSF52540">
    <property type="entry name" value="P-loop containing nucleoside triphosphate hydrolases"/>
    <property type="match status" value="1"/>
</dbReference>
<accession>Q6LZK1</accession>
<evidence type="ECO:0000255" key="1">
    <source>
        <dbReference type="HAMAP-Rule" id="MF_00239"/>
    </source>
</evidence>
<protein>
    <recommendedName>
        <fullName evidence="1">Cytidylate kinase</fullName>
        <shortName evidence="1">CK</shortName>
        <ecNumber evidence="1">2.7.4.25</ecNumber>
    </recommendedName>
    <alternativeName>
        <fullName evidence="1">Cytidine monophosphate kinase</fullName>
        <shortName evidence="1">CMP kinase</shortName>
    </alternativeName>
</protein>
<comment type="catalytic activity">
    <reaction evidence="1">
        <text>CMP + ATP = CDP + ADP</text>
        <dbReference type="Rhea" id="RHEA:11600"/>
        <dbReference type="ChEBI" id="CHEBI:30616"/>
        <dbReference type="ChEBI" id="CHEBI:58069"/>
        <dbReference type="ChEBI" id="CHEBI:60377"/>
        <dbReference type="ChEBI" id="CHEBI:456216"/>
        <dbReference type="EC" id="2.7.4.25"/>
    </reaction>
</comment>
<comment type="catalytic activity">
    <reaction evidence="1">
        <text>dCMP + ATP = dCDP + ADP</text>
        <dbReference type="Rhea" id="RHEA:25094"/>
        <dbReference type="ChEBI" id="CHEBI:30616"/>
        <dbReference type="ChEBI" id="CHEBI:57566"/>
        <dbReference type="ChEBI" id="CHEBI:58593"/>
        <dbReference type="ChEBI" id="CHEBI:456216"/>
        <dbReference type="EC" id="2.7.4.25"/>
    </reaction>
</comment>
<comment type="subcellular location">
    <subcellularLocation>
        <location evidence="1">Cytoplasm</location>
    </subcellularLocation>
</comment>
<comment type="similarity">
    <text evidence="1">Belongs to the cytidylate kinase family. Type 2 subfamily.</text>
</comment>
<feature type="chain" id="PRO_0000132016" description="Cytidylate kinase">
    <location>
        <begin position="1"/>
        <end position="178"/>
    </location>
</feature>
<feature type="binding site" evidence="1">
    <location>
        <begin position="7"/>
        <end position="15"/>
    </location>
    <ligand>
        <name>ATP</name>
        <dbReference type="ChEBI" id="CHEBI:30616"/>
    </ligand>
</feature>
<reference key="1">
    <citation type="journal article" date="2004" name="J. Bacteriol.">
        <title>Complete genome sequence of the genetically tractable hydrogenotrophic methanogen Methanococcus maripaludis.</title>
        <authorList>
            <person name="Hendrickson E.L."/>
            <person name="Kaul R."/>
            <person name="Zhou Y."/>
            <person name="Bovee D."/>
            <person name="Chapman P."/>
            <person name="Chung J."/>
            <person name="Conway de Macario E."/>
            <person name="Dodsworth J.A."/>
            <person name="Gillett W."/>
            <person name="Graham D.E."/>
            <person name="Hackett M."/>
            <person name="Haydock A.K."/>
            <person name="Kang A."/>
            <person name="Land M.L."/>
            <person name="Levy R."/>
            <person name="Lie T.J."/>
            <person name="Major T.A."/>
            <person name="Moore B.C."/>
            <person name="Porat I."/>
            <person name="Palmeiri A."/>
            <person name="Rouse G."/>
            <person name="Saenphimmachak C."/>
            <person name="Soell D."/>
            <person name="Van Dien S."/>
            <person name="Wang T."/>
            <person name="Whitman W.B."/>
            <person name="Xia Q."/>
            <person name="Zhang Y."/>
            <person name="Larimer F.W."/>
            <person name="Olson M.V."/>
            <person name="Leigh J.A."/>
        </authorList>
    </citation>
    <scope>NUCLEOTIDE SEQUENCE [LARGE SCALE GENOMIC DNA]</scope>
    <source>
        <strain>DSM 14266 / JCM 13030 / NBRC 101832 / S2 / LL</strain>
    </source>
</reference>
<organism>
    <name type="scientific">Methanococcus maripaludis (strain DSM 14266 / JCM 13030 / NBRC 101832 / S2 / LL)</name>
    <dbReference type="NCBI Taxonomy" id="267377"/>
    <lineage>
        <taxon>Archaea</taxon>
        <taxon>Methanobacteriati</taxon>
        <taxon>Methanobacteriota</taxon>
        <taxon>Methanomada group</taxon>
        <taxon>Methanococci</taxon>
        <taxon>Methanococcales</taxon>
        <taxon>Methanococcaceae</taxon>
        <taxon>Methanococcus</taxon>
    </lineage>
</organism>
<name>KCY_METMP</name>
<keyword id="KW-0067">ATP-binding</keyword>
<keyword id="KW-0963">Cytoplasm</keyword>
<keyword id="KW-0418">Kinase</keyword>
<keyword id="KW-0547">Nucleotide-binding</keyword>
<keyword id="KW-1185">Reference proteome</keyword>
<keyword id="KW-0808">Transferase</keyword>
<proteinExistence type="inferred from homology"/>
<gene>
    <name evidence="1" type="primary">cmk</name>
    <name type="ordered locus">MMP0626</name>
</gene>